<gene>
    <name evidence="1" type="primary">truA</name>
    <name type="ordered locus">PBPRA2653</name>
</gene>
<reference key="1">
    <citation type="journal article" date="2005" name="Science">
        <title>Life at depth: Photobacterium profundum genome sequence and expression analysis.</title>
        <authorList>
            <person name="Vezzi A."/>
            <person name="Campanaro S."/>
            <person name="D'Angelo M."/>
            <person name="Simonato F."/>
            <person name="Vitulo N."/>
            <person name="Lauro F.M."/>
            <person name="Cestaro A."/>
            <person name="Malacrida G."/>
            <person name="Simionati B."/>
            <person name="Cannata N."/>
            <person name="Romualdi C."/>
            <person name="Bartlett D.H."/>
            <person name="Valle G."/>
        </authorList>
    </citation>
    <scope>NUCLEOTIDE SEQUENCE [LARGE SCALE GENOMIC DNA]</scope>
    <source>
        <strain>ATCC BAA-1253 / SS9</strain>
    </source>
</reference>
<evidence type="ECO:0000255" key="1">
    <source>
        <dbReference type="HAMAP-Rule" id="MF_00171"/>
    </source>
</evidence>
<organism>
    <name type="scientific">Photobacterium profundum (strain SS9)</name>
    <dbReference type="NCBI Taxonomy" id="298386"/>
    <lineage>
        <taxon>Bacteria</taxon>
        <taxon>Pseudomonadati</taxon>
        <taxon>Pseudomonadota</taxon>
        <taxon>Gammaproteobacteria</taxon>
        <taxon>Vibrionales</taxon>
        <taxon>Vibrionaceae</taxon>
        <taxon>Photobacterium</taxon>
    </lineage>
</organism>
<comment type="function">
    <text evidence="1">Formation of pseudouridine at positions 38, 39 and 40 in the anticodon stem and loop of transfer RNAs.</text>
</comment>
<comment type="catalytic activity">
    <reaction evidence="1">
        <text>uridine(38/39/40) in tRNA = pseudouridine(38/39/40) in tRNA</text>
        <dbReference type="Rhea" id="RHEA:22376"/>
        <dbReference type="Rhea" id="RHEA-COMP:10085"/>
        <dbReference type="Rhea" id="RHEA-COMP:10087"/>
        <dbReference type="ChEBI" id="CHEBI:65314"/>
        <dbReference type="ChEBI" id="CHEBI:65315"/>
        <dbReference type="EC" id="5.4.99.12"/>
    </reaction>
</comment>
<comment type="subunit">
    <text evidence="1">Homodimer.</text>
</comment>
<comment type="similarity">
    <text evidence="1">Belongs to the tRNA pseudouridine synthase TruA family.</text>
</comment>
<sequence>MRIALGIEYDGAKYCGWQRQVDVDSVQERLEKALSHIANKPIAVFCAGRTDTGVHGTGQVVHFDVDVDRQMVAWTIGVNAHLPRDISVRWATQVSDDFHARFSATARRYRYIIYNSALRPAIFGVGVSHYHGHLDEKKMHEAAQYLVGEHDFTSVRASQCQSRSPWRAMKHVNVSRQGDFVIIDIKANAFVHHMVRNIAGSLIRVGRGQETPEWMKWVLEQKDRRVAGETAKAAGLYLVAVDYPEEFGLPSSPLGPIFLPD</sequence>
<protein>
    <recommendedName>
        <fullName evidence="1">tRNA pseudouridine synthase A</fullName>
        <ecNumber evidence="1">5.4.99.12</ecNumber>
    </recommendedName>
    <alternativeName>
        <fullName evidence="1">tRNA pseudouridine(38-40) synthase</fullName>
    </alternativeName>
    <alternativeName>
        <fullName evidence="1">tRNA pseudouridylate synthase I</fullName>
    </alternativeName>
    <alternativeName>
        <fullName evidence="1">tRNA-uridine isomerase I</fullName>
    </alternativeName>
</protein>
<dbReference type="EC" id="5.4.99.12" evidence="1"/>
<dbReference type="EMBL" id="CR378671">
    <property type="protein sequence ID" value="CAG21031.1"/>
    <property type="molecule type" value="Genomic_DNA"/>
</dbReference>
<dbReference type="RefSeq" id="WP_011219310.1">
    <property type="nucleotide sequence ID" value="NC_006370.1"/>
</dbReference>
<dbReference type="SMR" id="Q6LNU5"/>
<dbReference type="STRING" id="298386.PBPRA2653"/>
<dbReference type="KEGG" id="ppr:PBPRA2653"/>
<dbReference type="eggNOG" id="COG0101">
    <property type="taxonomic scope" value="Bacteria"/>
</dbReference>
<dbReference type="HOGENOM" id="CLU_014673_0_2_6"/>
<dbReference type="Proteomes" id="UP000000593">
    <property type="component" value="Chromosome 1"/>
</dbReference>
<dbReference type="GO" id="GO:0003723">
    <property type="term" value="F:RNA binding"/>
    <property type="evidence" value="ECO:0007669"/>
    <property type="project" value="InterPro"/>
</dbReference>
<dbReference type="GO" id="GO:0160147">
    <property type="term" value="F:tRNA pseudouridine(38-40) synthase activity"/>
    <property type="evidence" value="ECO:0007669"/>
    <property type="project" value="UniProtKB-EC"/>
</dbReference>
<dbReference type="GO" id="GO:0031119">
    <property type="term" value="P:tRNA pseudouridine synthesis"/>
    <property type="evidence" value="ECO:0007669"/>
    <property type="project" value="UniProtKB-UniRule"/>
</dbReference>
<dbReference type="CDD" id="cd02570">
    <property type="entry name" value="PseudoU_synth_EcTruA"/>
    <property type="match status" value="1"/>
</dbReference>
<dbReference type="FunFam" id="3.30.70.580:FF:000001">
    <property type="entry name" value="tRNA pseudouridine synthase A"/>
    <property type="match status" value="1"/>
</dbReference>
<dbReference type="FunFam" id="3.30.70.660:FF:000001">
    <property type="entry name" value="tRNA pseudouridine synthase A"/>
    <property type="match status" value="1"/>
</dbReference>
<dbReference type="Gene3D" id="3.30.70.660">
    <property type="entry name" value="Pseudouridine synthase I, catalytic domain, C-terminal subdomain"/>
    <property type="match status" value="1"/>
</dbReference>
<dbReference type="Gene3D" id="3.30.70.580">
    <property type="entry name" value="Pseudouridine synthase I, catalytic domain, N-terminal subdomain"/>
    <property type="match status" value="1"/>
</dbReference>
<dbReference type="HAMAP" id="MF_00171">
    <property type="entry name" value="TruA"/>
    <property type="match status" value="1"/>
</dbReference>
<dbReference type="InterPro" id="IPR020103">
    <property type="entry name" value="PsdUridine_synth_cat_dom_sf"/>
</dbReference>
<dbReference type="InterPro" id="IPR001406">
    <property type="entry name" value="PsdUridine_synth_TruA"/>
</dbReference>
<dbReference type="InterPro" id="IPR020097">
    <property type="entry name" value="PsdUridine_synth_TruA_a/b_dom"/>
</dbReference>
<dbReference type="InterPro" id="IPR020095">
    <property type="entry name" value="PsdUridine_synth_TruA_C"/>
</dbReference>
<dbReference type="InterPro" id="IPR020094">
    <property type="entry name" value="TruA/RsuA/RluB/E/F_N"/>
</dbReference>
<dbReference type="NCBIfam" id="TIGR00071">
    <property type="entry name" value="hisT_truA"/>
    <property type="match status" value="1"/>
</dbReference>
<dbReference type="PANTHER" id="PTHR11142">
    <property type="entry name" value="PSEUDOURIDYLATE SYNTHASE"/>
    <property type="match status" value="1"/>
</dbReference>
<dbReference type="PANTHER" id="PTHR11142:SF0">
    <property type="entry name" value="TRNA PSEUDOURIDINE SYNTHASE-LIKE 1"/>
    <property type="match status" value="1"/>
</dbReference>
<dbReference type="Pfam" id="PF01416">
    <property type="entry name" value="PseudoU_synth_1"/>
    <property type="match status" value="2"/>
</dbReference>
<dbReference type="PIRSF" id="PIRSF001430">
    <property type="entry name" value="tRNA_psdUrid_synth"/>
    <property type="match status" value="1"/>
</dbReference>
<dbReference type="SUPFAM" id="SSF55120">
    <property type="entry name" value="Pseudouridine synthase"/>
    <property type="match status" value="1"/>
</dbReference>
<proteinExistence type="inferred from homology"/>
<feature type="chain" id="PRO_0000057429" description="tRNA pseudouridine synthase A">
    <location>
        <begin position="1"/>
        <end position="261"/>
    </location>
</feature>
<feature type="active site" description="Nucleophile" evidence="1">
    <location>
        <position position="51"/>
    </location>
</feature>
<feature type="binding site" evidence="1">
    <location>
        <position position="109"/>
    </location>
    <ligand>
        <name>substrate</name>
    </ligand>
</feature>
<keyword id="KW-0413">Isomerase</keyword>
<keyword id="KW-1185">Reference proteome</keyword>
<keyword id="KW-0819">tRNA processing</keyword>
<accession>Q6LNU5</accession>
<name>TRUA_PHOPR</name>